<organism>
    <name type="scientific">Prochlorococcus marinus (strain SARG / CCMP1375 / SS120)</name>
    <dbReference type="NCBI Taxonomy" id="167539"/>
    <lineage>
        <taxon>Bacteria</taxon>
        <taxon>Bacillati</taxon>
        <taxon>Cyanobacteriota</taxon>
        <taxon>Cyanophyceae</taxon>
        <taxon>Synechococcales</taxon>
        <taxon>Prochlorococcaceae</taxon>
        <taxon>Prochlorococcus</taxon>
    </lineage>
</organism>
<protein>
    <recommendedName>
        <fullName evidence="1">CinA-like protein</fullName>
    </recommendedName>
</protein>
<reference key="1">
    <citation type="journal article" date="2003" name="Proc. Natl. Acad. Sci. U.S.A.">
        <title>Genome sequence of the cyanobacterium Prochlorococcus marinus SS120, a nearly minimal oxyphototrophic genome.</title>
        <authorList>
            <person name="Dufresne A."/>
            <person name="Salanoubat M."/>
            <person name="Partensky F."/>
            <person name="Artiguenave F."/>
            <person name="Axmann I.M."/>
            <person name="Barbe V."/>
            <person name="Duprat S."/>
            <person name="Galperin M.Y."/>
            <person name="Koonin E.V."/>
            <person name="Le Gall F."/>
            <person name="Makarova K.S."/>
            <person name="Ostrowski M."/>
            <person name="Oztas S."/>
            <person name="Robert C."/>
            <person name="Rogozin I.B."/>
            <person name="Scanlan D.J."/>
            <person name="Tandeau de Marsac N."/>
            <person name="Weissenbach J."/>
            <person name="Wincker P."/>
            <person name="Wolf Y.I."/>
            <person name="Hess W.R."/>
        </authorList>
    </citation>
    <scope>NUCLEOTIDE SEQUENCE [LARGE SCALE GENOMIC DNA]</scope>
    <source>
        <strain>SARG / CCMP1375 / SS120</strain>
    </source>
</reference>
<proteinExistence type="inferred from homology"/>
<evidence type="ECO:0000255" key="1">
    <source>
        <dbReference type="HAMAP-Rule" id="MF_00226"/>
    </source>
</evidence>
<dbReference type="EMBL" id="AE017126">
    <property type="protein sequence ID" value="AAP99335.1"/>
    <property type="molecule type" value="Genomic_DNA"/>
</dbReference>
<dbReference type="RefSeq" id="NP_874683.1">
    <property type="nucleotide sequence ID" value="NC_005042.1"/>
</dbReference>
<dbReference type="RefSeq" id="WP_011124444.1">
    <property type="nucleotide sequence ID" value="NC_005042.1"/>
</dbReference>
<dbReference type="SMR" id="Q7VDS9"/>
<dbReference type="STRING" id="167539.Pro_0289"/>
<dbReference type="EnsemblBacteria" id="AAP99335">
    <property type="protein sequence ID" value="AAP99335"/>
    <property type="gene ID" value="Pro_0289"/>
</dbReference>
<dbReference type="KEGG" id="pma:Pro_0289"/>
<dbReference type="PATRIC" id="fig|167539.5.peg.296"/>
<dbReference type="eggNOG" id="COG1058">
    <property type="taxonomic scope" value="Bacteria"/>
</dbReference>
<dbReference type="eggNOG" id="COG1546">
    <property type="taxonomic scope" value="Bacteria"/>
</dbReference>
<dbReference type="HOGENOM" id="CLU_030805_9_3_3"/>
<dbReference type="OrthoDB" id="9801454at2"/>
<dbReference type="Proteomes" id="UP000001420">
    <property type="component" value="Chromosome"/>
</dbReference>
<dbReference type="CDD" id="cd00885">
    <property type="entry name" value="cinA"/>
    <property type="match status" value="1"/>
</dbReference>
<dbReference type="Gene3D" id="3.30.70.2860">
    <property type="match status" value="1"/>
</dbReference>
<dbReference type="Gene3D" id="3.90.950.20">
    <property type="entry name" value="CinA-like"/>
    <property type="match status" value="1"/>
</dbReference>
<dbReference type="Gene3D" id="3.40.980.10">
    <property type="entry name" value="MoaB/Mog-like domain"/>
    <property type="match status" value="1"/>
</dbReference>
<dbReference type="HAMAP" id="MF_00226_B">
    <property type="entry name" value="CinA_B"/>
    <property type="match status" value="1"/>
</dbReference>
<dbReference type="InterPro" id="IPR050101">
    <property type="entry name" value="CinA"/>
</dbReference>
<dbReference type="InterPro" id="IPR036653">
    <property type="entry name" value="CinA-like_C"/>
</dbReference>
<dbReference type="InterPro" id="IPR008136">
    <property type="entry name" value="CinA_C"/>
</dbReference>
<dbReference type="InterPro" id="IPR041424">
    <property type="entry name" value="CinA_KH"/>
</dbReference>
<dbReference type="InterPro" id="IPR008135">
    <property type="entry name" value="Competence-induced_CinA"/>
</dbReference>
<dbReference type="InterPro" id="IPR036425">
    <property type="entry name" value="MoaB/Mog-like_dom_sf"/>
</dbReference>
<dbReference type="InterPro" id="IPR001453">
    <property type="entry name" value="MoaB/Mog_dom"/>
</dbReference>
<dbReference type="NCBIfam" id="TIGR00200">
    <property type="entry name" value="cinA_nterm"/>
    <property type="match status" value="1"/>
</dbReference>
<dbReference type="NCBIfam" id="TIGR00199">
    <property type="entry name" value="PncC_domain"/>
    <property type="match status" value="1"/>
</dbReference>
<dbReference type="NCBIfam" id="NF001813">
    <property type="entry name" value="PRK00549.1"/>
    <property type="match status" value="1"/>
</dbReference>
<dbReference type="PANTHER" id="PTHR13939">
    <property type="entry name" value="NICOTINAMIDE-NUCLEOTIDE AMIDOHYDROLASE PNCC"/>
    <property type="match status" value="1"/>
</dbReference>
<dbReference type="PANTHER" id="PTHR13939:SF0">
    <property type="entry name" value="NMN AMIDOHYDROLASE-LIKE PROTEIN YFAY"/>
    <property type="match status" value="1"/>
</dbReference>
<dbReference type="Pfam" id="PF02464">
    <property type="entry name" value="CinA"/>
    <property type="match status" value="1"/>
</dbReference>
<dbReference type="Pfam" id="PF18146">
    <property type="entry name" value="CinA_KH"/>
    <property type="match status" value="1"/>
</dbReference>
<dbReference type="Pfam" id="PF00994">
    <property type="entry name" value="MoCF_biosynth"/>
    <property type="match status" value="1"/>
</dbReference>
<dbReference type="PIRSF" id="PIRSF006728">
    <property type="entry name" value="CinA"/>
    <property type="match status" value="1"/>
</dbReference>
<dbReference type="SMART" id="SM00852">
    <property type="entry name" value="MoCF_biosynth"/>
    <property type="match status" value="1"/>
</dbReference>
<dbReference type="SUPFAM" id="SSF142433">
    <property type="entry name" value="CinA-like"/>
    <property type="match status" value="1"/>
</dbReference>
<dbReference type="SUPFAM" id="SSF53218">
    <property type="entry name" value="Molybdenum cofactor biosynthesis proteins"/>
    <property type="match status" value="1"/>
</dbReference>
<keyword id="KW-1185">Reference proteome</keyword>
<sequence>MSSYINKNQSVEILCIGSELLLGNILNSNAKWLAEQLAFIGLPHYLQSVVGDNSQRLLRIILEASRRSRVLITTGGLGPTPDDLTIETIASAFNVKLTKNNDILKDIKRKLNSHSHVSENNFKQALLPEGAEIIPNKSGTAPGIIWTPIVDFTIISLPGVPAEMKQMWIETAKPWLNVNFPERKSLTSKTLKFAGISESFLAENIVDLLDNKNPTIAPYASLGEVKLRLTAQAKTTSEAKRLIEPIEVELLKRFGLKCFAKNDETLSEIVIGLLSKRGETISLAESCTGGNLAAAFTGTPGASEVFLGGIVAYNNSIKENVLGVPIELIKKHGAVSQPVAKEMALGILKIFNTDWSIAISGIAGPSGSTLNKPIGRVEIFIAGPNVNESIQENFGSYRAREEIQKLSVVRALDQLRLFLLRRS</sequence>
<accession>Q7VDS9</accession>
<comment type="similarity">
    <text evidence="1">Belongs to the CinA family.</text>
</comment>
<gene>
    <name evidence="1" type="primary">cinA</name>
    <name type="ordered locus">Pro_0289</name>
</gene>
<feature type="chain" id="PRO_0000156772" description="CinA-like protein">
    <location>
        <begin position="1"/>
        <end position="423"/>
    </location>
</feature>
<name>CINAL_PROMA</name>